<keyword id="KW-0131">Cell cycle</keyword>
<keyword id="KW-0132">Cell division</keyword>
<keyword id="KW-1003">Cell membrane</keyword>
<keyword id="KW-0133">Cell shape</keyword>
<keyword id="KW-0961">Cell wall biogenesis/degradation</keyword>
<keyword id="KW-0328">Glycosyltransferase</keyword>
<keyword id="KW-0472">Membrane</keyword>
<keyword id="KW-0573">Peptidoglycan synthesis</keyword>
<keyword id="KW-0808">Transferase</keyword>
<gene>
    <name evidence="1" type="primary">murG</name>
    <name type="ordered locus">SSU05_0477</name>
</gene>
<reference key="1">
    <citation type="journal article" date="2007" name="PLoS ONE">
        <title>A glimpse of streptococcal toxic shock syndrome from comparative genomics of S. suis 2 Chinese isolates.</title>
        <authorList>
            <person name="Chen C."/>
            <person name="Tang J."/>
            <person name="Dong W."/>
            <person name="Wang C."/>
            <person name="Feng Y."/>
            <person name="Wang J."/>
            <person name="Zheng F."/>
            <person name="Pan X."/>
            <person name="Liu D."/>
            <person name="Li M."/>
            <person name="Song Y."/>
            <person name="Zhu X."/>
            <person name="Sun H."/>
            <person name="Feng T."/>
            <person name="Guo Z."/>
            <person name="Ju A."/>
            <person name="Ge J."/>
            <person name="Dong Y."/>
            <person name="Sun W."/>
            <person name="Jiang Y."/>
            <person name="Wang J."/>
            <person name="Yan J."/>
            <person name="Yang H."/>
            <person name="Wang X."/>
            <person name="Gao G.F."/>
            <person name="Yang R."/>
            <person name="Wang J."/>
            <person name="Yu J."/>
        </authorList>
    </citation>
    <scope>NUCLEOTIDE SEQUENCE [LARGE SCALE GENOMIC DNA]</scope>
    <source>
        <strain>05ZYH33</strain>
    </source>
</reference>
<feature type="chain" id="PRO_0000315183" description="UDP-N-acetylglucosamine--N-acetylmuramyl-(pentapeptide) pyrophosphoryl-undecaprenol N-acetylglucosamine transferase">
    <location>
        <begin position="1"/>
        <end position="354"/>
    </location>
</feature>
<feature type="binding site" evidence="1">
    <location>
        <position position="196"/>
    </location>
    <ligand>
        <name>UDP-N-acetyl-alpha-D-glucosamine</name>
        <dbReference type="ChEBI" id="CHEBI:57705"/>
    </ligand>
</feature>
<feature type="binding site" evidence="1">
    <location>
        <position position="288"/>
    </location>
    <ligand>
        <name>UDP-N-acetyl-alpha-D-glucosamine</name>
        <dbReference type="ChEBI" id="CHEBI:57705"/>
    </ligand>
</feature>
<comment type="function">
    <text evidence="1">Cell wall formation. Catalyzes the transfer of a GlcNAc subunit on undecaprenyl-pyrophosphoryl-MurNAc-pentapeptide (lipid intermediate I) to form undecaprenyl-pyrophosphoryl-MurNAc-(pentapeptide)GlcNAc (lipid intermediate II).</text>
</comment>
<comment type="catalytic activity">
    <reaction evidence="1">
        <text>Mur2Ac(oyl-L-Ala-gamma-D-Glu-L-Lys-D-Ala-D-Ala)-di-trans,octa-cis-undecaprenyl diphosphate + UDP-N-acetyl-alpha-D-glucosamine = beta-D-GlcNAc-(1-&gt;4)-Mur2Ac(oyl-L-Ala-gamma-D-Glu-L-Lys-D-Ala-D-Ala)-di-trans,octa-cis-undecaprenyl diphosphate + UDP + H(+)</text>
        <dbReference type="Rhea" id="RHEA:23192"/>
        <dbReference type="ChEBI" id="CHEBI:15378"/>
        <dbReference type="ChEBI" id="CHEBI:57705"/>
        <dbReference type="ChEBI" id="CHEBI:58223"/>
        <dbReference type="ChEBI" id="CHEBI:60032"/>
        <dbReference type="ChEBI" id="CHEBI:60033"/>
        <dbReference type="EC" id="2.4.1.227"/>
    </reaction>
</comment>
<comment type="pathway">
    <text evidence="1">Cell wall biogenesis; peptidoglycan biosynthesis.</text>
</comment>
<comment type="subcellular location">
    <subcellularLocation>
        <location evidence="1">Cell membrane</location>
        <topology evidence="1">Peripheral membrane protein</topology>
        <orientation evidence="1">Cytoplasmic side</orientation>
    </subcellularLocation>
</comment>
<comment type="similarity">
    <text evidence="1">Belongs to the glycosyltransferase 28 family. MurG subfamily.</text>
</comment>
<evidence type="ECO:0000255" key="1">
    <source>
        <dbReference type="HAMAP-Rule" id="MF_00033"/>
    </source>
</evidence>
<name>MURG_STRSY</name>
<sequence>MKKIVFTGGGTVGHVTLNLLLIPRFLEEGWEVHYIGDGNGIEHEQVVKSGLDVHFHSIATGKLRRYFSFQNMLDVFKVGFGVLQSLTIIAKIRPQALFSKGGFVSVPPVIAANLLRVPVFIHESDLTMGLANKIAYKFATTMYSTFEQPASLTKVKHVGAVTKVGQTNDKVTPIQLPEILSHFDKSLPTLLFVGGSGGAKVFNDLISQNSAALTERFNIINLTGDSSLNKLDKNLYRVDYVTELYQPLMDLADVVITRGGSNTLFELIAMQQLHLIVPLGRQASRGDQIENALYAEKKGYSKQIDESQLTFASLLVEVDELLKHKEFYVQNMANSNEIQSVDSFYNLLREDMGR</sequence>
<protein>
    <recommendedName>
        <fullName evidence="1">UDP-N-acetylglucosamine--N-acetylmuramyl-(pentapeptide) pyrophosphoryl-undecaprenol N-acetylglucosamine transferase</fullName>
        <ecNumber evidence="1">2.4.1.227</ecNumber>
    </recommendedName>
    <alternativeName>
        <fullName evidence="1">Undecaprenyl-PP-MurNAc-pentapeptide-UDPGlcNAc GlcNAc transferase</fullName>
    </alternativeName>
</protein>
<dbReference type="EC" id="2.4.1.227" evidence="1"/>
<dbReference type="EMBL" id="CP000407">
    <property type="protein sequence ID" value="ABP89443.1"/>
    <property type="molecule type" value="Genomic_DNA"/>
</dbReference>
<dbReference type="SMR" id="A4VTK4"/>
<dbReference type="STRING" id="391295.SSU05_0477"/>
<dbReference type="CAZy" id="GT28">
    <property type="family name" value="Glycosyltransferase Family 28"/>
</dbReference>
<dbReference type="KEGG" id="ssu:SSU05_0477"/>
<dbReference type="eggNOG" id="COG0707">
    <property type="taxonomic scope" value="Bacteria"/>
</dbReference>
<dbReference type="HOGENOM" id="CLU_037404_0_0_9"/>
<dbReference type="UniPathway" id="UPA00219"/>
<dbReference type="GO" id="GO:0005886">
    <property type="term" value="C:plasma membrane"/>
    <property type="evidence" value="ECO:0007669"/>
    <property type="project" value="UniProtKB-SubCell"/>
</dbReference>
<dbReference type="GO" id="GO:0050511">
    <property type="term" value="F:undecaprenyldiphospho-muramoylpentapeptide beta-N-acetylglucosaminyltransferase activity"/>
    <property type="evidence" value="ECO:0007669"/>
    <property type="project" value="UniProtKB-UniRule"/>
</dbReference>
<dbReference type="GO" id="GO:0005975">
    <property type="term" value="P:carbohydrate metabolic process"/>
    <property type="evidence" value="ECO:0007669"/>
    <property type="project" value="InterPro"/>
</dbReference>
<dbReference type="GO" id="GO:0051301">
    <property type="term" value="P:cell division"/>
    <property type="evidence" value="ECO:0007669"/>
    <property type="project" value="UniProtKB-KW"/>
</dbReference>
<dbReference type="GO" id="GO:0071555">
    <property type="term" value="P:cell wall organization"/>
    <property type="evidence" value="ECO:0007669"/>
    <property type="project" value="UniProtKB-KW"/>
</dbReference>
<dbReference type="GO" id="GO:0030259">
    <property type="term" value="P:lipid glycosylation"/>
    <property type="evidence" value="ECO:0007669"/>
    <property type="project" value="UniProtKB-UniRule"/>
</dbReference>
<dbReference type="GO" id="GO:0009252">
    <property type="term" value="P:peptidoglycan biosynthetic process"/>
    <property type="evidence" value="ECO:0007669"/>
    <property type="project" value="UniProtKB-UniRule"/>
</dbReference>
<dbReference type="GO" id="GO:0008360">
    <property type="term" value="P:regulation of cell shape"/>
    <property type="evidence" value="ECO:0007669"/>
    <property type="project" value="UniProtKB-KW"/>
</dbReference>
<dbReference type="CDD" id="cd03785">
    <property type="entry name" value="GT28_MurG"/>
    <property type="match status" value="1"/>
</dbReference>
<dbReference type="Gene3D" id="3.40.50.2000">
    <property type="entry name" value="Glycogen Phosphorylase B"/>
    <property type="match status" value="2"/>
</dbReference>
<dbReference type="HAMAP" id="MF_00033">
    <property type="entry name" value="MurG"/>
    <property type="match status" value="1"/>
</dbReference>
<dbReference type="InterPro" id="IPR006009">
    <property type="entry name" value="GlcNAc_MurG"/>
</dbReference>
<dbReference type="InterPro" id="IPR007235">
    <property type="entry name" value="Glyco_trans_28_C"/>
</dbReference>
<dbReference type="InterPro" id="IPR004276">
    <property type="entry name" value="GlycoTrans_28_N"/>
</dbReference>
<dbReference type="PANTHER" id="PTHR21015:SF27">
    <property type="entry name" value="UDP-N-ACETYLGLUCOSAMINE--N-ACETYLMURAMYL-(PENTAPEPTIDE) PYROPHOSPHORYL-UNDECAPRENOL N-ACETYLGLUCOSAMINE TRANSFERASE"/>
    <property type="match status" value="1"/>
</dbReference>
<dbReference type="PANTHER" id="PTHR21015">
    <property type="entry name" value="UDP-N-ACETYLGLUCOSAMINE--N-ACETYLMURAMYL-(PENTAPEPTIDE) PYROPHOSPHORYL-UNDECAPRENOL N-ACETYLGLUCOSAMINE TRANSFERASE 1"/>
    <property type="match status" value="1"/>
</dbReference>
<dbReference type="Pfam" id="PF04101">
    <property type="entry name" value="Glyco_tran_28_C"/>
    <property type="match status" value="1"/>
</dbReference>
<dbReference type="Pfam" id="PF03033">
    <property type="entry name" value="Glyco_transf_28"/>
    <property type="match status" value="1"/>
</dbReference>
<dbReference type="SUPFAM" id="SSF53756">
    <property type="entry name" value="UDP-Glycosyltransferase/glycogen phosphorylase"/>
    <property type="match status" value="1"/>
</dbReference>
<proteinExistence type="inferred from homology"/>
<organism>
    <name type="scientific">Streptococcus suis (strain 05ZYH33)</name>
    <dbReference type="NCBI Taxonomy" id="391295"/>
    <lineage>
        <taxon>Bacteria</taxon>
        <taxon>Bacillati</taxon>
        <taxon>Bacillota</taxon>
        <taxon>Bacilli</taxon>
        <taxon>Lactobacillales</taxon>
        <taxon>Streptococcaceae</taxon>
        <taxon>Streptococcus</taxon>
    </lineage>
</organism>
<accession>A4VTK4</accession>